<reference key="1">
    <citation type="journal article" date="2007" name="J. Bacteriol.">
        <title>The genome sequence of avian pathogenic Escherichia coli strain O1:K1:H7 shares strong similarities with human extraintestinal pathogenic E. coli genomes.</title>
        <authorList>
            <person name="Johnson T.J."/>
            <person name="Kariyawasam S."/>
            <person name="Wannemuehler Y."/>
            <person name="Mangiamele P."/>
            <person name="Johnson S.J."/>
            <person name="Doetkott C."/>
            <person name="Skyberg J.A."/>
            <person name="Lynne A.M."/>
            <person name="Johnson J.R."/>
            <person name="Nolan L.K."/>
        </authorList>
    </citation>
    <scope>NUCLEOTIDE SEQUENCE [LARGE SCALE GENOMIC DNA]</scope>
</reference>
<feature type="chain" id="PRO_0000301311" description="Phosphoglucosamine mutase">
    <location>
        <begin position="1"/>
        <end position="445"/>
    </location>
</feature>
<feature type="active site" description="Phosphoserine intermediate" evidence="1">
    <location>
        <position position="102"/>
    </location>
</feature>
<feature type="binding site" description="via phosphate group" evidence="1">
    <location>
        <position position="102"/>
    </location>
    <ligand>
        <name>Mg(2+)</name>
        <dbReference type="ChEBI" id="CHEBI:18420"/>
    </ligand>
</feature>
<feature type="binding site" evidence="1">
    <location>
        <position position="241"/>
    </location>
    <ligand>
        <name>Mg(2+)</name>
        <dbReference type="ChEBI" id="CHEBI:18420"/>
    </ligand>
</feature>
<feature type="binding site" evidence="1">
    <location>
        <position position="243"/>
    </location>
    <ligand>
        <name>Mg(2+)</name>
        <dbReference type="ChEBI" id="CHEBI:18420"/>
    </ligand>
</feature>
<feature type="binding site" evidence="1">
    <location>
        <position position="245"/>
    </location>
    <ligand>
        <name>Mg(2+)</name>
        <dbReference type="ChEBI" id="CHEBI:18420"/>
    </ligand>
</feature>
<feature type="modified residue" description="Phosphoserine" evidence="1">
    <location>
        <position position="102"/>
    </location>
</feature>
<proteinExistence type="inferred from homology"/>
<accession>A1AG79</accession>
<keyword id="KW-0413">Isomerase</keyword>
<keyword id="KW-0460">Magnesium</keyword>
<keyword id="KW-0479">Metal-binding</keyword>
<keyword id="KW-0597">Phosphoprotein</keyword>
<keyword id="KW-1185">Reference proteome</keyword>
<name>GLMM_ECOK1</name>
<organism>
    <name type="scientific">Escherichia coli O1:K1 / APEC</name>
    <dbReference type="NCBI Taxonomy" id="405955"/>
    <lineage>
        <taxon>Bacteria</taxon>
        <taxon>Pseudomonadati</taxon>
        <taxon>Pseudomonadota</taxon>
        <taxon>Gammaproteobacteria</taxon>
        <taxon>Enterobacterales</taxon>
        <taxon>Enterobacteriaceae</taxon>
        <taxon>Escherichia</taxon>
    </lineage>
</organism>
<sequence>MSNRKYFGTDGIRGRVGDAPITPDFVLKLGWAAGKVLARHGSRKIIIGKDTRISGYMLESALEAGLAAAGLSALFTGPMPTPAVAYLTRTFRAEAGIVISASHNPFYDNGIKFFSIDGTKLPDAVEEAIEAEMEKEISCVDSAELGKASRIVDAAGRYIEFCKATFPNELSLSELKIVVDCANGATYHIAPNVLRELGANVIAIGCEPNGVNINAEVGATDVRALQARVLAEKADLGIAFDGDGDRVIMVDHEGNKVDGDQIMYIIAREGLRQGQLRGGAVGTLMSNMGLELALKQLGIPFARAKVGDRYVLEKMQEKGWRIGAENSGHVILLDKTTTGDGIVAGLQVLAAMARNHMSLHDLCSGMKMFPQILVNVRYTAGSGDPLEHESVKAVTAEVEAALGSRGRVLLRKSGTEPLIRVMVEGEDEAQVTEFAHRIADAVKAV</sequence>
<gene>
    <name evidence="1" type="primary">glmM</name>
    <name type="ordered locus">Ecok1_31750</name>
    <name type="ORF">APECO1_3256</name>
</gene>
<comment type="function">
    <text evidence="1">Catalyzes the conversion of glucosamine-6-phosphate to glucosamine-1-phosphate.</text>
</comment>
<comment type="catalytic activity">
    <reaction evidence="1">
        <text>alpha-D-glucosamine 1-phosphate = D-glucosamine 6-phosphate</text>
        <dbReference type="Rhea" id="RHEA:23424"/>
        <dbReference type="ChEBI" id="CHEBI:58516"/>
        <dbReference type="ChEBI" id="CHEBI:58725"/>
        <dbReference type="EC" id="5.4.2.10"/>
    </reaction>
</comment>
<comment type="cofactor">
    <cofactor evidence="1">
        <name>Mg(2+)</name>
        <dbReference type="ChEBI" id="CHEBI:18420"/>
    </cofactor>
    <text evidence="1">Binds 1 Mg(2+) ion per subunit.</text>
</comment>
<comment type="PTM">
    <text evidence="1">Activated by phosphorylation.</text>
</comment>
<comment type="similarity">
    <text evidence="1">Belongs to the phosphohexose mutase family.</text>
</comment>
<dbReference type="EC" id="5.4.2.10" evidence="1"/>
<dbReference type="EMBL" id="CP000468">
    <property type="protein sequence ID" value="ABJ02669.1"/>
    <property type="molecule type" value="Genomic_DNA"/>
</dbReference>
<dbReference type="RefSeq" id="WP_000071137.1">
    <property type="nucleotide sequence ID" value="NZ_CADILS010000003.1"/>
</dbReference>
<dbReference type="SMR" id="A1AG79"/>
<dbReference type="GeneID" id="93778805"/>
<dbReference type="KEGG" id="ecv:APECO1_3256"/>
<dbReference type="HOGENOM" id="CLU_016950_7_0_6"/>
<dbReference type="Proteomes" id="UP000008216">
    <property type="component" value="Chromosome"/>
</dbReference>
<dbReference type="GO" id="GO:0005829">
    <property type="term" value="C:cytosol"/>
    <property type="evidence" value="ECO:0007669"/>
    <property type="project" value="TreeGrafter"/>
</dbReference>
<dbReference type="GO" id="GO:0000287">
    <property type="term" value="F:magnesium ion binding"/>
    <property type="evidence" value="ECO:0007669"/>
    <property type="project" value="UniProtKB-UniRule"/>
</dbReference>
<dbReference type="GO" id="GO:0008966">
    <property type="term" value="F:phosphoglucosamine mutase activity"/>
    <property type="evidence" value="ECO:0007669"/>
    <property type="project" value="UniProtKB-UniRule"/>
</dbReference>
<dbReference type="GO" id="GO:0004615">
    <property type="term" value="F:phosphomannomutase activity"/>
    <property type="evidence" value="ECO:0007669"/>
    <property type="project" value="TreeGrafter"/>
</dbReference>
<dbReference type="GO" id="GO:0005975">
    <property type="term" value="P:carbohydrate metabolic process"/>
    <property type="evidence" value="ECO:0007669"/>
    <property type="project" value="InterPro"/>
</dbReference>
<dbReference type="GO" id="GO:0009252">
    <property type="term" value="P:peptidoglycan biosynthetic process"/>
    <property type="evidence" value="ECO:0007669"/>
    <property type="project" value="TreeGrafter"/>
</dbReference>
<dbReference type="GO" id="GO:0006048">
    <property type="term" value="P:UDP-N-acetylglucosamine biosynthetic process"/>
    <property type="evidence" value="ECO:0007669"/>
    <property type="project" value="TreeGrafter"/>
</dbReference>
<dbReference type="CDD" id="cd05802">
    <property type="entry name" value="GlmM"/>
    <property type="match status" value="1"/>
</dbReference>
<dbReference type="FunFam" id="3.30.310.50:FF:000001">
    <property type="entry name" value="Phosphoglucosamine mutase"/>
    <property type="match status" value="1"/>
</dbReference>
<dbReference type="FunFam" id="3.40.120.10:FF:000001">
    <property type="entry name" value="Phosphoglucosamine mutase"/>
    <property type="match status" value="1"/>
</dbReference>
<dbReference type="FunFam" id="3.40.120.10:FF:000002">
    <property type="entry name" value="Phosphoglucosamine mutase"/>
    <property type="match status" value="1"/>
</dbReference>
<dbReference type="Gene3D" id="3.40.120.10">
    <property type="entry name" value="Alpha-D-Glucose-1,6-Bisphosphate, subunit A, domain 3"/>
    <property type="match status" value="3"/>
</dbReference>
<dbReference type="Gene3D" id="3.30.310.50">
    <property type="entry name" value="Alpha-D-phosphohexomutase, C-terminal domain"/>
    <property type="match status" value="1"/>
</dbReference>
<dbReference type="HAMAP" id="MF_01554_B">
    <property type="entry name" value="GlmM_B"/>
    <property type="match status" value="1"/>
</dbReference>
<dbReference type="InterPro" id="IPR005844">
    <property type="entry name" value="A-D-PHexomutase_a/b/a-I"/>
</dbReference>
<dbReference type="InterPro" id="IPR016055">
    <property type="entry name" value="A-D-PHexomutase_a/b/a-I/II/III"/>
</dbReference>
<dbReference type="InterPro" id="IPR005845">
    <property type="entry name" value="A-D-PHexomutase_a/b/a-II"/>
</dbReference>
<dbReference type="InterPro" id="IPR005846">
    <property type="entry name" value="A-D-PHexomutase_a/b/a-III"/>
</dbReference>
<dbReference type="InterPro" id="IPR005843">
    <property type="entry name" value="A-D-PHexomutase_C"/>
</dbReference>
<dbReference type="InterPro" id="IPR036900">
    <property type="entry name" value="A-D-PHexomutase_C_sf"/>
</dbReference>
<dbReference type="InterPro" id="IPR016066">
    <property type="entry name" value="A-D-PHexomutase_CS"/>
</dbReference>
<dbReference type="InterPro" id="IPR005841">
    <property type="entry name" value="Alpha-D-phosphohexomutase_SF"/>
</dbReference>
<dbReference type="InterPro" id="IPR006352">
    <property type="entry name" value="GlmM_bact"/>
</dbReference>
<dbReference type="InterPro" id="IPR050060">
    <property type="entry name" value="Phosphoglucosamine_mutase"/>
</dbReference>
<dbReference type="NCBIfam" id="TIGR01455">
    <property type="entry name" value="glmM"/>
    <property type="match status" value="1"/>
</dbReference>
<dbReference type="NCBIfam" id="NF008139">
    <property type="entry name" value="PRK10887.1"/>
    <property type="match status" value="1"/>
</dbReference>
<dbReference type="PANTHER" id="PTHR42946:SF1">
    <property type="entry name" value="PHOSPHOGLUCOMUTASE (ALPHA-D-GLUCOSE-1,6-BISPHOSPHATE-DEPENDENT)"/>
    <property type="match status" value="1"/>
</dbReference>
<dbReference type="PANTHER" id="PTHR42946">
    <property type="entry name" value="PHOSPHOHEXOSE MUTASE"/>
    <property type="match status" value="1"/>
</dbReference>
<dbReference type="Pfam" id="PF02878">
    <property type="entry name" value="PGM_PMM_I"/>
    <property type="match status" value="1"/>
</dbReference>
<dbReference type="Pfam" id="PF02879">
    <property type="entry name" value="PGM_PMM_II"/>
    <property type="match status" value="1"/>
</dbReference>
<dbReference type="Pfam" id="PF02880">
    <property type="entry name" value="PGM_PMM_III"/>
    <property type="match status" value="1"/>
</dbReference>
<dbReference type="Pfam" id="PF00408">
    <property type="entry name" value="PGM_PMM_IV"/>
    <property type="match status" value="1"/>
</dbReference>
<dbReference type="PRINTS" id="PR00509">
    <property type="entry name" value="PGMPMM"/>
</dbReference>
<dbReference type="SUPFAM" id="SSF55957">
    <property type="entry name" value="Phosphoglucomutase, C-terminal domain"/>
    <property type="match status" value="1"/>
</dbReference>
<dbReference type="SUPFAM" id="SSF53738">
    <property type="entry name" value="Phosphoglucomutase, first 3 domains"/>
    <property type="match status" value="3"/>
</dbReference>
<dbReference type="PROSITE" id="PS00710">
    <property type="entry name" value="PGM_PMM"/>
    <property type="match status" value="1"/>
</dbReference>
<evidence type="ECO:0000255" key="1">
    <source>
        <dbReference type="HAMAP-Rule" id="MF_01554"/>
    </source>
</evidence>
<protein>
    <recommendedName>
        <fullName evidence="1">Phosphoglucosamine mutase</fullName>
        <ecNumber evidence="1">5.4.2.10</ecNumber>
    </recommendedName>
</protein>